<feature type="signal peptide" evidence="3 7">
    <location>
        <begin position="1"/>
        <end position="33"/>
    </location>
</feature>
<feature type="chain" id="PRO_5000092109" description="Beta-galactoside-specific lectin 2 chain A">
    <location>
        <begin position="34"/>
        <end position="287"/>
    </location>
</feature>
<feature type="propeptide" id="PRO_0000284728" description="Connecting peptide" evidence="1">
    <location>
        <begin position="288"/>
        <end position="301"/>
    </location>
</feature>
<feature type="chain" id="PRO_5000092110" description="Beta-galactoside-specific lectin 2 chain B">
    <location>
        <begin position="302"/>
        <end position="567"/>
    </location>
</feature>
<feature type="domain" description="Ricin B-type lectin 1" evidence="4">
    <location>
        <begin position="309"/>
        <end position="439"/>
    </location>
</feature>
<feature type="domain" description="Ricin B-type lectin 2" evidence="4">
    <location>
        <begin position="443"/>
        <end position="566"/>
    </location>
</feature>
<feature type="active site" evidence="2">
    <location>
        <position position="198"/>
    </location>
</feature>
<feature type="binding site" evidence="1">
    <location>
        <begin position="324"/>
        <end position="326"/>
    </location>
    <ligand>
        <name>D-galactose</name>
        <dbReference type="ChEBI" id="CHEBI:4139"/>
    </ligand>
</feature>
<feature type="binding site" evidence="1">
    <location>
        <begin position="539"/>
        <end position="541"/>
    </location>
    <ligand>
        <name>D-galactose</name>
        <dbReference type="ChEBI" id="CHEBI:4139"/>
    </ligand>
</feature>
<feature type="glycosylation site" description="N-linked (GlcNAc...) asparagine" evidence="3">
    <location>
        <position position="145"/>
    </location>
</feature>
<feature type="glycosylation site" description="N-linked (GlcNAc...) asparagine" evidence="3">
    <location>
        <position position="362"/>
    </location>
</feature>
<feature type="glycosylation site" description="N-linked (GlcNAc...) asparagine" evidence="3">
    <location>
        <position position="440"/>
    </location>
</feature>
<feature type="disulfide bond" description="Interchain (between A and B chains)" evidence="1 4">
    <location>
        <begin position="280"/>
        <end position="306"/>
    </location>
</feature>
<feature type="disulfide bond" evidence="2 4">
    <location>
        <begin position="322"/>
        <end position="341"/>
    </location>
</feature>
<feature type="disulfide bond" evidence="1 4">
    <location>
        <begin position="365"/>
        <end position="382"/>
    </location>
</feature>
<feature type="disulfide bond" evidence="1 4">
    <location>
        <begin position="456"/>
        <end position="469"/>
    </location>
</feature>
<feature type="disulfide bond" evidence="1 4">
    <location>
        <begin position="495"/>
        <end position="512"/>
    </location>
</feature>
<feature type="sequence conflict" description="In Ref. 1; AAR25549." evidence="6" ref="1">
    <original>V</original>
    <variation>L</variation>
    <location>
        <position position="18"/>
    </location>
</feature>
<feature type="sequence conflict" description="In Ref. 1; AAR25549." evidence="6" ref="1">
    <original>A</original>
    <variation>T</variation>
    <location>
        <position position="26"/>
    </location>
</feature>
<feature type="sequence conflict" description="In Ref. 1; AAR25549." evidence="6" ref="1">
    <original>S</original>
    <variation>T</variation>
    <location>
        <position position="30"/>
    </location>
</feature>
<feature type="sequence conflict" description="In Ref. 1; AAR25549." evidence="6" ref="1">
    <original>K</original>
    <variation>E</variation>
    <location>
        <position position="44"/>
    </location>
</feature>
<feature type="sequence conflict" description="In Ref. 1; AAR25549." evidence="6" ref="1">
    <original>I</original>
    <variation>M</variation>
    <location>
        <position position="63"/>
    </location>
</feature>
<feature type="sequence conflict" description="In Ref. 1; AAR25549." evidence="6" ref="1">
    <original>W</original>
    <variation>G</variation>
    <location>
        <position position="95"/>
    </location>
</feature>
<feature type="sequence conflict" description="In Ref. 1; AAR25549." evidence="6" ref="1">
    <original>H</original>
    <variation>D</variation>
    <location>
        <position position="127"/>
    </location>
</feature>
<feature type="sequence conflict" description="In Ref. 1; AAR25549." evidence="6" ref="1">
    <original>A</original>
    <variation>V</variation>
    <location>
        <position position="199"/>
    </location>
</feature>
<feature type="sequence conflict" description="In Ref. 1; AAR25549." evidence="6" ref="1">
    <original>V</original>
    <variation>I</variation>
    <location>
        <position position="246"/>
    </location>
</feature>
<feature type="sequence conflict" description="In Ref. 1; AAR25551." evidence="6" ref="1">
    <original>V</original>
    <variation>A</variation>
    <location>
        <position position="289"/>
    </location>
</feature>
<feature type="sequence conflict" description="In Ref. 1; AAR25549." evidence="6" ref="1">
    <original>R</original>
    <variation>Q</variation>
    <location>
        <position position="314"/>
    </location>
</feature>
<feature type="sequence conflict" description="In Ref. 1; AAR25549." evidence="6" ref="1">
    <original>R</original>
    <variation>H</variation>
    <location>
        <position position="331"/>
    </location>
</feature>
<feature type="sequence conflict" description="In Ref. 1; AAR25549." evidence="6" ref="1">
    <original>SC</original>
    <variation>RF</variation>
    <location>
        <begin position="364"/>
        <end position="365"/>
    </location>
</feature>
<feature type="sequence conflict" description="In Ref. 1; AAR25549." evidence="6" ref="1">
    <original>Q</original>
    <variation>L</variation>
    <location>
        <position position="393"/>
    </location>
</feature>
<feature type="sequence conflict" description="In Ref. 1; AAR25549." evidence="6" ref="1">
    <original>D</original>
    <variation>Y</variation>
    <location>
        <position position="430"/>
    </location>
</feature>
<feature type="sequence conflict" description="In Ref. 1; AAR25549." evidence="6" ref="1">
    <original>T</original>
    <variation>I</variation>
    <location>
        <position position="442"/>
    </location>
</feature>
<feature type="sequence conflict" description="In Ref. 1; AAR25549." evidence="6" ref="1">
    <original>S</original>
    <variation>T</variation>
    <location>
        <position position="468"/>
    </location>
</feature>
<feature type="sequence conflict" description="In Ref. 1; AAR25549." evidence="6" ref="1">
    <original>S</original>
    <variation>F</variation>
    <location>
        <position position="505"/>
    </location>
</feature>
<feature type="sequence conflict" description="In Ref. 1; AAR25549." evidence="6" ref="1">
    <original>S</original>
    <variation>N</variation>
    <location>
        <position position="556"/>
    </location>
</feature>
<feature type="sequence conflict" description="In Ref. 1; AAR25549." evidence="6" ref="1">
    <original>V</original>
    <variation>M</variation>
    <location>
        <position position="566"/>
    </location>
</feature>
<comment type="function">
    <text evidence="1 5">The A chain is responsible for inhibiting protein synthesis through the catalytic inactivation of 60S ribosomal subunits by removing adenine from position 4,324 of 28S rRNA. The B chain binds to cell receptors and probably facilitates the entry into the cell of the A chain; B chains are also responsible for cell agglutination (lectin activity).</text>
</comment>
<comment type="catalytic activity">
    <reaction evidence="1">
        <text>Endohydrolysis of the N-glycosidic bond at one specific adenosine on the 28S rRNA.</text>
        <dbReference type="EC" id="3.2.2.22"/>
    </reaction>
</comment>
<comment type="subunit">
    <text evidence="1">Disulfide-linked dimer of A and B chains.</text>
</comment>
<comment type="miscellaneous">
    <text evidence="5">Several isoforms exist.</text>
</comment>
<comment type="similarity">
    <text evidence="3">Belongs to the ribosome-inactivating protein family. Type 2 RIP subfamily.</text>
</comment>
<sequence length="567" mass="63410">MNARLASSRAWVWCFLMVGLVCGATAKAESKINYRRISLRVTDKTTGDEYFRFITILRDYVSIGSFSNDIPLLRQSTIPVSDAQRFVLVELTNQWGDSITAAIDVTNLYVVAYQAAGQSYYLRDAPHGAERHLFTGTTRSSLPFNGSYADLERYAGHRDRIPLGREPLLRSVSALHYPGGSTRAQASSIIIVIQMISEAARFNPILWRARQYINRGVSFLPDVYMLELETSWGRQSTQVQQSTDGVFNNPIRLGISTGNFVTLSNVRDVIPSLAIMVFVCRDRSSSSDVHNWPLVIRPVMVDDVTCTTSEPTVRIVGRNGMCLDVRDSDYRDGSRIQLWPCKSNSDPNQLWTIRRDGTIRSNGSCLTTYGYTAGSYIMMYDCNRAGWDLTTWQIRGNGIIFNPRSKMVIGTPSGSRGTRGTTFTLQTLDDSLGQSWLASNDTAPREVTIYGFRDLCMETSGGRVWVESCVSSKQNQRWALYGDGSIRPKPYQDQCLTSQGDSVRSVINLFSCTAGSPRQRWVFTNKGTILNLKNGLALDVRESNPSLRQIIIFSVSGNPNQMWLPVP</sequence>
<proteinExistence type="evidence at transcript level"/>
<keyword id="KW-1015">Disulfide bond</keyword>
<keyword id="KW-0325">Glycoprotein</keyword>
<keyword id="KW-0378">Hydrolase</keyword>
<keyword id="KW-0430">Lectin</keyword>
<keyword id="KW-0611">Plant defense</keyword>
<keyword id="KW-0652">Protein synthesis inhibitor</keyword>
<keyword id="KW-0677">Repeat</keyword>
<keyword id="KW-0732">Signal</keyword>
<keyword id="KW-0800">Toxin</keyword>
<organism>
    <name type="scientific">Viscum album</name>
    <name type="common">European mistletoe</name>
    <dbReference type="NCBI Taxonomy" id="3972"/>
    <lineage>
        <taxon>Eukaryota</taxon>
        <taxon>Viridiplantae</taxon>
        <taxon>Streptophyta</taxon>
        <taxon>Embryophyta</taxon>
        <taxon>Tracheophyta</taxon>
        <taxon>Spermatophyta</taxon>
        <taxon>Magnoliopsida</taxon>
        <taxon>eudicotyledons</taxon>
        <taxon>Gunneridae</taxon>
        <taxon>Pentapetalae</taxon>
        <taxon>Santalales</taxon>
        <taxon>Viscaceae</taxon>
        <taxon>Viscum</taxon>
    </lineage>
</organism>
<reference evidence="6 7" key="1">
    <citation type="journal article" date="2004" name="Eur. J. Biochem.">
        <title>Cloning and characterization of the genes encoding toxic lectins in mistletoe (Viscum album L).</title>
        <authorList>
            <person name="Kourmanova A.G."/>
            <person name="Soudarkina O.J."/>
            <person name="Olsnes S."/>
            <person name="Kozlov J.V."/>
        </authorList>
    </citation>
    <scope>NUCLEOTIDE SEQUENCE [GENOMIC DNA / MRNA]</scope>
    <scope>FUNCTION</scope>
    <source>
        <tissue evidence="7">Leaf</tissue>
    </source>
</reference>
<dbReference type="EC" id="3.2.2.22"/>
<dbReference type="EMBL" id="AY377894">
    <property type="protein sequence ID" value="AAR25549.1"/>
    <property type="molecule type" value="Genomic_DNA"/>
</dbReference>
<dbReference type="EMBL" id="AY377895">
    <property type="protein sequence ID" value="AAR25550.1"/>
    <property type="molecule type" value="Genomic_DNA"/>
</dbReference>
<dbReference type="EMBL" id="AY377896">
    <property type="protein sequence ID" value="AAR25551.1"/>
    <property type="molecule type" value="mRNA"/>
</dbReference>
<dbReference type="SMR" id="Q6H266"/>
<dbReference type="CAZy" id="CBM13">
    <property type="family name" value="Carbohydrate-Binding Module Family 13"/>
</dbReference>
<dbReference type="GO" id="GO:0030246">
    <property type="term" value="F:carbohydrate binding"/>
    <property type="evidence" value="ECO:0007669"/>
    <property type="project" value="UniProtKB-KW"/>
</dbReference>
<dbReference type="GO" id="GO:0030598">
    <property type="term" value="F:rRNA N-glycosylase activity"/>
    <property type="evidence" value="ECO:0007669"/>
    <property type="project" value="UniProtKB-EC"/>
</dbReference>
<dbReference type="GO" id="GO:0090729">
    <property type="term" value="F:toxin activity"/>
    <property type="evidence" value="ECO:0007669"/>
    <property type="project" value="UniProtKB-KW"/>
</dbReference>
<dbReference type="GO" id="GO:0006952">
    <property type="term" value="P:defense response"/>
    <property type="evidence" value="ECO:0007669"/>
    <property type="project" value="UniProtKB-KW"/>
</dbReference>
<dbReference type="GO" id="GO:0017148">
    <property type="term" value="P:negative regulation of translation"/>
    <property type="evidence" value="ECO:0007669"/>
    <property type="project" value="UniProtKB-KW"/>
</dbReference>
<dbReference type="CDD" id="cd23485">
    <property type="entry name" value="beta-trefoil_Ricin_MLs_rpt1"/>
    <property type="match status" value="1"/>
</dbReference>
<dbReference type="CDD" id="cd23492">
    <property type="entry name" value="beta-trefoil_Ricin_MLs_rpt2"/>
    <property type="match status" value="1"/>
</dbReference>
<dbReference type="Gene3D" id="2.80.10.50">
    <property type="match status" value="2"/>
</dbReference>
<dbReference type="Gene3D" id="3.40.420.10">
    <property type="entry name" value="Ricin (A subunit), domain 1"/>
    <property type="match status" value="1"/>
</dbReference>
<dbReference type="Gene3D" id="4.10.470.10">
    <property type="entry name" value="Ricin (A Subunit), domain 2"/>
    <property type="match status" value="1"/>
</dbReference>
<dbReference type="InterPro" id="IPR036041">
    <property type="entry name" value="Ribosome-inact_prot_sf"/>
</dbReference>
<dbReference type="InterPro" id="IPR017989">
    <property type="entry name" value="Ribosome_inactivat_1/2"/>
</dbReference>
<dbReference type="InterPro" id="IPR001574">
    <property type="entry name" value="Ribosome_inactivat_prot"/>
</dbReference>
<dbReference type="InterPro" id="IPR016138">
    <property type="entry name" value="Ribosome_inactivat_prot_sub1"/>
</dbReference>
<dbReference type="InterPro" id="IPR016139">
    <property type="entry name" value="Ribosome_inactivat_prot_sub2"/>
</dbReference>
<dbReference type="InterPro" id="IPR035992">
    <property type="entry name" value="Ricin_B-like_lectins"/>
</dbReference>
<dbReference type="InterPro" id="IPR000772">
    <property type="entry name" value="Ricin_B_lectin"/>
</dbReference>
<dbReference type="PANTHER" id="PTHR33453">
    <property type="match status" value="1"/>
</dbReference>
<dbReference type="PANTHER" id="PTHR33453:SF34">
    <property type="entry name" value="RIBOSOME-INACTIVATING PROTEIN"/>
    <property type="match status" value="1"/>
</dbReference>
<dbReference type="Pfam" id="PF00652">
    <property type="entry name" value="Ricin_B_lectin"/>
    <property type="match status" value="2"/>
</dbReference>
<dbReference type="Pfam" id="PF00161">
    <property type="entry name" value="RIP"/>
    <property type="match status" value="1"/>
</dbReference>
<dbReference type="PRINTS" id="PR00396">
    <property type="entry name" value="SHIGARICIN"/>
</dbReference>
<dbReference type="SMART" id="SM00458">
    <property type="entry name" value="RICIN"/>
    <property type="match status" value="2"/>
</dbReference>
<dbReference type="SUPFAM" id="SSF56371">
    <property type="entry name" value="Ribosome inactivating proteins (RIP)"/>
    <property type="match status" value="1"/>
</dbReference>
<dbReference type="SUPFAM" id="SSF50370">
    <property type="entry name" value="Ricin B-like lectins"/>
    <property type="match status" value="2"/>
</dbReference>
<dbReference type="PROSITE" id="PS50231">
    <property type="entry name" value="RICIN_B_LECTIN"/>
    <property type="match status" value="2"/>
</dbReference>
<evidence type="ECO:0000250" key="1">
    <source>
        <dbReference type="UniProtKB" id="P81446"/>
    </source>
</evidence>
<evidence type="ECO:0000250" key="2">
    <source>
        <dbReference type="UniProtKB" id="Q6ITZ3"/>
    </source>
</evidence>
<evidence type="ECO:0000255" key="3"/>
<evidence type="ECO:0000255" key="4">
    <source>
        <dbReference type="PROSITE-ProRule" id="PRU00174"/>
    </source>
</evidence>
<evidence type="ECO:0000269" key="5">
    <source>
    </source>
</evidence>
<evidence type="ECO:0000305" key="6"/>
<evidence type="ECO:0000312" key="7">
    <source>
        <dbReference type="EMBL" id="AAR25550.1"/>
    </source>
</evidence>
<name>ML2_VISAL</name>
<protein>
    <recommendedName>
        <fullName>Beta-galactoside-specific lectin 2</fullName>
    </recommendedName>
    <alternativeName>
        <fullName>Beta-galactoside-specific lectin II</fullName>
    </alternativeName>
    <alternativeName>
        <fullName>Beta-galactoside-specific lectin III</fullName>
    </alternativeName>
    <component>
        <recommendedName>
            <fullName>Beta-galactoside-specific lectin 2 chain A</fullName>
            <ecNumber>3.2.2.22</ecNumber>
        </recommendedName>
        <alternativeName>
            <fullName>Beta-galactoside-specific lectin II chain A</fullName>
        </alternativeName>
        <alternativeName>
            <fullName>ML-2 A</fullName>
        </alternativeName>
        <alternativeName>
            <fullName>ML-II A</fullName>
        </alternativeName>
        <alternativeName>
            <fullName>rRNA N-glycosidase</fullName>
        </alternativeName>
    </component>
    <component>
        <recommendedName>
            <fullName>Beta-galactoside-specific lectin 2 chain B</fullName>
        </recommendedName>
        <alternativeName>
            <fullName>Beta-galactoside-specific lectin II chain B</fullName>
        </alternativeName>
        <alternativeName>
            <fullName>ML-2B</fullName>
        </alternativeName>
        <alternativeName>
            <fullName>ML-II B</fullName>
        </alternativeName>
    </component>
</protein>
<accession>Q6H266</accession>
<accession>Q6H265</accession>
<accession>Q6H267</accession>